<protein>
    <recommendedName>
        <fullName>Olfactory receptor 4Q2</fullName>
    </recommendedName>
    <alternativeName>
        <fullName>olfactory receptor OR14-21</fullName>
    </alternativeName>
</protein>
<keyword id="KW-1003">Cell membrane</keyword>
<keyword id="KW-1015">Disulfide bond</keyword>
<keyword id="KW-0297">G-protein coupled receptor</keyword>
<keyword id="KW-0325">Glycoprotein</keyword>
<keyword id="KW-0472">Membrane</keyword>
<keyword id="KW-0552">Olfaction</keyword>
<keyword id="KW-0675">Receptor</keyword>
<keyword id="KW-1185">Reference proteome</keyword>
<keyword id="KW-0716">Sensory transduction</keyword>
<keyword id="KW-0807">Transducer</keyword>
<keyword id="KW-0812">Transmembrane</keyword>
<keyword id="KW-1133">Transmembrane helix</keyword>
<evidence type="ECO:0000255" key="1"/>
<evidence type="ECO:0000255" key="2">
    <source>
        <dbReference type="PROSITE-ProRule" id="PRU00521"/>
    </source>
</evidence>
<evidence type="ECO:0000305" key="3"/>
<reference key="1">
    <citation type="journal article" date="2003" name="Nature">
        <title>The DNA sequence and analysis of human chromosome 14.</title>
        <authorList>
            <person name="Heilig R."/>
            <person name="Eckenberg R."/>
            <person name="Petit J.-L."/>
            <person name="Fonknechten N."/>
            <person name="Da Silva C."/>
            <person name="Cattolico L."/>
            <person name="Levy M."/>
            <person name="Barbe V."/>
            <person name="De Berardinis V."/>
            <person name="Ureta-Vidal A."/>
            <person name="Pelletier E."/>
            <person name="Vico V."/>
            <person name="Anthouard V."/>
            <person name="Rowen L."/>
            <person name="Madan A."/>
            <person name="Qin S."/>
            <person name="Sun H."/>
            <person name="Du H."/>
            <person name="Pepin K."/>
            <person name="Artiguenave F."/>
            <person name="Robert C."/>
            <person name="Cruaud C."/>
            <person name="Bruels T."/>
            <person name="Jaillon O."/>
            <person name="Friedlander L."/>
            <person name="Samson G."/>
            <person name="Brottier P."/>
            <person name="Cure S."/>
            <person name="Segurens B."/>
            <person name="Aniere F."/>
            <person name="Samain S."/>
            <person name="Crespeau H."/>
            <person name="Abbasi N."/>
            <person name="Aiach N."/>
            <person name="Boscus D."/>
            <person name="Dickhoff R."/>
            <person name="Dors M."/>
            <person name="Dubois I."/>
            <person name="Friedman C."/>
            <person name="Gouyvenoux M."/>
            <person name="James R."/>
            <person name="Madan A."/>
            <person name="Mairey-Estrada B."/>
            <person name="Mangenot S."/>
            <person name="Martins N."/>
            <person name="Menard M."/>
            <person name="Oztas S."/>
            <person name="Ratcliffe A."/>
            <person name="Shaffer T."/>
            <person name="Trask B."/>
            <person name="Vacherie B."/>
            <person name="Bellemere C."/>
            <person name="Belser C."/>
            <person name="Besnard-Gonnet M."/>
            <person name="Bartol-Mavel D."/>
            <person name="Boutard M."/>
            <person name="Briez-Silla S."/>
            <person name="Combette S."/>
            <person name="Dufosse-Laurent V."/>
            <person name="Ferron C."/>
            <person name="Lechaplais C."/>
            <person name="Louesse C."/>
            <person name="Muselet D."/>
            <person name="Magdelenat G."/>
            <person name="Pateau E."/>
            <person name="Petit E."/>
            <person name="Sirvain-Trukniewicz P."/>
            <person name="Trybou A."/>
            <person name="Vega-Czarny N."/>
            <person name="Bataille E."/>
            <person name="Bluet E."/>
            <person name="Bordelais I."/>
            <person name="Dubois M."/>
            <person name="Dumont C."/>
            <person name="Guerin T."/>
            <person name="Haffray S."/>
            <person name="Hammadi R."/>
            <person name="Muanga J."/>
            <person name="Pellouin V."/>
            <person name="Robert D."/>
            <person name="Wunderle E."/>
            <person name="Gauguet G."/>
            <person name="Roy A."/>
            <person name="Sainte-Marthe L."/>
            <person name="Verdier J."/>
            <person name="Verdier-Discala C."/>
            <person name="Hillier L.W."/>
            <person name="Fulton L."/>
            <person name="McPherson J."/>
            <person name="Matsuda F."/>
            <person name="Wilson R."/>
            <person name="Scarpelli C."/>
            <person name="Gyapay G."/>
            <person name="Wincker P."/>
            <person name="Saurin W."/>
            <person name="Quetier F."/>
            <person name="Waterston R."/>
            <person name="Hood L."/>
            <person name="Weissenbach J."/>
        </authorList>
    </citation>
    <scope>NUCLEOTIDE SEQUENCE [LARGE SCALE GENOMIC DNA]</scope>
</reference>
<reference key="2">
    <citation type="journal article" date="2002" name="Genomics">
        <title>DEFOG: a practical scheme for deciphering families of genes.</title>
        <authorList>
            <person name="Fuchs T."/>
            <person name="Malecova B."/>
            <person name="Linhart C."/>
            <person name="Sharan R."/>
            <person name="Khen M."/>
            <person name="Herwig R."/>
            <person name="Shmulevich D."/>
            <person name="Elkon R."/>
            <person name="Steinfath M."/>
            <person name="O'Brien J.K."/>
            <person name="Radelof U."/>
            <person name="Lehrach H."/>
            <person name="Lancet D."/>
            <person name="Shamir R."/>
        </authorList>
    </citation>
    <scope>NUCLEOTIDE SEQUENCE [GENOMIC DNA] OF 69-280</scope>
</reference>
<reference key="3">
    <citation type="journal article" date="2004" name="Proc. Natl. Acad. Sci. U.S.A.">
        <title>The human olfactory receptor gene family.</title>
        <authorList>
            <person name="Malnic B."/>
            <person name="Godfrey P.A."/>
            <person name="Buck L.B."/>
        </authorList>
    </citation>
    <scope>IDENTIFICATION</scope>
</reference>
<reference key="4">
    <citation type="journal article" date="2004" name="Proc. Natl. Acad. Sci. U.S.A.">
        <authorList>
            <person name="Malnic B."/>
            <person name="Godfrey P.A."/>
            <person name="Buck L.B."/>
        </authorList>
    </citation>
    <scope>ERRATUM OF PUBMED:14983052</scope>
</reference>
<reference key="5">
    <citation type="journal article" date="2003" name="Nat. Genet.">
        <title>Different noses for different people.</title>
        <authorList>
            <person name="Menashe I."/>
            <person name="Man O."/>
            <person name="Lancet D."/>
            <person name="Gilad Y."/>
        </authorList>
    </citation>
    <scope>POLYMORPHISM</scope>
</reference>
<proteinExistence type="inferred from homology"/>
<sequence length="314" mass="35588">MDKNQTEVMREFFLSGFSQTPSIEAGLFVLFLFFYMSIWVGNVLIMVTVASDKYLNSSPMYFLLGNLSFLDLCYSTVTTPKLLADFFNHEKLISYDQCIVQLFFLHFVGAAEMFLLTVMAYDRYVAICRPLHYTTVMSRGLCCVLVAASWMGGFVHSTVQTILTVHLPFCGPNQVENTFFCDVPPVIKLACADTFVIELLMVSNSGLISTISFVVLISSYTTILVKIRSKEGRRKALSTCASHLMVVTLFFGPCIFIYARPFSTFSVDKMVSVLYNVITPMLNPLIYTLRNKEVKSAMQKLWVRNGLTWKKQET</sequence>
<gene>
    <name type="primary">OR4Q2</name>
    <name type="synonym">OR4Q2P</name>
</gene>
<organism>
    <name type="scientific">Homo sapiens</name>
    <name type="common">Human</name>
    <dbReference type="NCBI Taxonomy" id="9606"/>
    <lineage>
        <taxon>Eukaryota</taxon>
        <taxon>Metazoa</taxon>
        <taxon>Chordata</taxon>
        <taxon>Craniata</taxon>
        <taxon>Vertebrata</taxon>
        <taxon>Euteleostomi</taxon>
        <taxon>Mammalia</taxon>
        <taxon>Eutheria</taxon>
        <taxon>Euarchontoglires</taxon>
        <taxon>Primates</taxon>
        <taxon>Haplorrhini</taxon>
        <taxon>Catarrhini</taxon>
        <taxon>Hominidae</taxon>
        <taxon>Homo</taxon>
    </lineage>
</organism>
<comment type="function">
    <text evidence="3">Odorant receptor.</text>
</comment>
<comment type="subcellular location">
    <subcellularLocation>
        <location>Cell membrane</location>
        <topology>Multi-pass membrane protein</topology>
    </subcellularLocation>
</comment>
<comment type="polymorphism">
    <text>A single nucleotide insertion at position Cys-180 in the gene coding for this protein is responsible for functional diversity thus producing a pseudogene.</text>
</comment>
<comment type="similarity">
    <text evidence="2">Belongs to the G-protein coupled receptor 1 family.</text>
</comment>
<comment type="online information" name="Human Olfactory Receptor Data Exploratorium (HORDE)">
    <link uri="http://genome.weizmann.ac.il/horde/card/index/symbol:OR4Q2P"/>
</comment>
<feature type="chain" id="PRO_0000314664" description="Olfactory receptor 4Q2">
    <location>
        <begin position="1"/>
        <end position="314"/>
    </location>
</feature>
<feature type="topological domain" description="Extracellular" evidence="1">
    <location>
        <begin position="1"/>
        <end position="26"/>
    </location>
</feature>
<feature type="transmembrane region" description="Helical; Name=1" evidence="1">
    <location>
        <begin position="27"/>
        <end position="47"/>
    </location>
</feature>
<feature type="topological domain" description="Cytoplasmic" evidence="1">
    <location>
        <begin position="48"/>
        <end position="61"/>
    </location>
</feature>
<feature type="transmembrane region" description="Helical; Name=2" evidence="1">
    <location>
        <begin position="62"/>
        <end position="84"/>
    </location>
</feature>
<feature type="topological domain" description="Extracellular" evidence="1">
    <location>
        <begin position="85"/>
        <end position="98"/>
    </location>
</feature>
<feature type="transmembrane region" description="Helical; Name=3" evidence="1">
    <location>
        <begin position="99"/>
        <end position="119"/>
    </location>
</feature>
<feature type="topological domain" description="Cytoplasmic" evidence="1">
    <location>
        <begin position="120"/>
        <end position="142"/>
    </location>
</feature>
<feature type="transmembrane region" description="Helical; Name=4" evidence="1">
    <location>
        <begin position="143"/>
        <end position="163"/>
    </location>
</feature>
<feature type="topological domain" description="Extracellular" evidence="1">
    <location>
        <begin position="164"/>
        <end position="196"/>
    </location>
</feature>
<feature type="transmembrane region" description="Helical; Name=5" evidence="1">
    <location>
        <begin position="197"/>
        <end position="217"/>
    </location>
</feature>
<feature type="topological domain" description="Cytoplasmic" evidence="1">
    <location>
        <begin position="218"/>
        <end position="236"/>
    </location>
</feature>
<feature type="transmembrane region" description="Helical; Name=6" evidence="1">
    <location>
        <begin position="237"/>
        <end position="257"/>
    </location>
</feature>
<feature type="topological domain" description="Extracellular" evidence="1">
    <location>
        <begin position="258"/>
        <end position="268"/>
    </location>
</feature>
<feature type="transmembrane region" description="Helical; Name=7" evidence="1">
    <location>
        <begin position="269"/>
        <end position="289"/>
    </location>
</feature>
<feature type="topological domain" description="Cytoplasmic" evidence="1">
    <location>
        <begin position="290"/>
        <end position="314"/>
    </location>
</feature>
<feature type="glycosylation site" description="N-linked (GlcNAc...) asparagine" evidence="1">
    <location>
        <position position="4"/>
    </location>
</feature>
<feature type="disulfide bond" evidence="2">
    <location>
        <begin position="98"/>
        <end position="181"/>
    </location>
</feature>
<dbReference type="EMBL" id="AL359218">
    <property type="status" value="NOT_ANNOTATED_CDS"/>
    <property type="molecule type" value="Genomic_DNA"/>
</dbReference>
<dbReference type="EMBL" id="AF399446">
    <property type="status" value="NOT_ANNOTATED_CDS"/>
    <property type="molecule type" value="Genomic_DNA"/>
</dbReference>
<dbReference type="EMBL" id="BK004624">
    <property type="status" value="NOT_ANNOTATED_CDS"/>
    <property type="molecule type" value="Genomic_DNA"/>
</dbReference>
<dbReference type="SMR" id="P0C623"/>
<dbReference type="GlyCosmos" id="P0C623">
    <property type="glycosylation" value="1 site, No reported glycans"/>
</dbReference>
<dbReference type="GlyGen" id="P0C623">
    <property type="glycosylation" value="1 site"/>
</dbReference>
<dbReference type="BioMuta" id="OR4Q2"/>
<dbReference type="DMDM" id="166215772"/>
<dbReference type="UCSC" id="uc058yqw.1">
    <property type="organism name" value="human"/>
</dbReference>
<dbReference type="AGR" id="HGNC:15359"/>
<dbReference type="GeneCards" id="OR4Q2"/>
<dbReference type="HGNC" id="HGNC:15359">
    <property type="gene designation" value="OR4Q2"/>
</dbReference>
<dbReference type="neXtProt" id="NX_P0C623"/>
<dbReference type="VEuPathDB" id="HostDB:ENSG00000196383"/>
<dbReference type="InParanoid" id="P0C623"/>
<dbReference type="OrthoDB" id="9845816at2759"/>
<dbReference type="PAN-GO" id="P0C623">
    <property type="GO annotations" value="2 GO annotations based on evolutionary models"/>
</dbReference>
<dbReference type="PhylomeDB" id="P0C623"/>
<dbReference type="PathwayCommons" id="P0C623"/>
<dbReference type="Reactome" id="R-HSA-9752946">
    <property type="pathway name" value="Expression and translocation of olfactory receptors"/>
</dbReference>
<dbReference type="Pharos" id="P0C623">
    <property type="development level" value="Tdark"/>
</dbReference>
<dbReference type="PRO" id="PR:P0C623"/>
<dbReference type="Proteomes" id="UP000005640">
    <property type="component" value="Chromosome 14"/>
</dbReference>
<dbReference type="RNAct" id="P0C623">
    <property type="molecule type" value="protein"/>
</dbReference>
<dbReference type="GO" id="GO:0005886">
    <property type="term" value="C:plasma membrane"/>
    <property type="evidence" value="ECO:0000318"/>
    <property type="project" value="GO_Central"/>
</dbReference>
<dbReference type="GO" id="GO:0004930">
    <property type="term" value="F:G protein-coupled receptor activity"/>
    <property type="evidence" value="ECO:0007669"/>
    <property type="project" value="UniProtKB-KW"/>
</dbReference>
<dbReference type="GO" id="GO:0004984">
    <property type="term" value="F:olfactory receptor activity"/>
    <property type="evidence" value="ECO:0000318"/>
    <property type="project" value="GO_Central"/>
</dbReference>
<dbReference type="CDD" id="cd15938">
    <property type="entry name" value="7tmA_OR4Q2-like"/>
    <property type="match status" value="1"/>
</dbReference>
<dbReference type="FunFam" id="1.20.1070.10:FF:000007">
    <property type="entry name" value="Olfactory receptor"/>
    <property type="match status" value="1"/>
</dbReference>
<dbReference type="Gene3D" id="1.20.1070.10">
    <property type="entry name" value="Rhodopsin 7-helix transmembrane proteins"/>
    <property type="match status" value="1"/>
</dbReference>
<dbReference type="InterPro" id="IPR000276">
    <property type="entry name" value="GPCR_Rhodpsn"/>
</dbReference>
<dbReference type="InterPro" id="IPR017452">
    <property type="entry name" value="GPCR_Rhodpsn_7TM"/>
</dbReference>
<dbReference type="InterPro" id="IPR000725">
    <property type="entry name" value="Olfact_rcpt"/>
</dbReference>
<dbReference type="InterPro" id="IPR050427">
    <property type="entry name" value="Olfactory_Receptors"/>
</dbReference>
<dbReference type="PANTHER" id="PTHR48002">
    <property type="entry name" value="OLFACTORY RECEPTOR"/>
    <property type="match status" value="1"/>
</dbReference>
<dbReference type="Pfam" id="PF13853">
    <property type="entry name" value="7tm_4"/>
    <property type="match status" value="1"/>
</dbReference>
<dbReference type="PRINTS" id="PR00237">
    <property type="entry name" value="GPCRRHODOPSN"/>
</dbReference>
<dbReference type="PRINTS" id="PR00245">
    <property type="entry name" value="OLFACTORYR"/>
</dbReference>
<dbReference type="SUPFAM" id="SSF81321">
    <property type="entry name" value="Family A G protein-coupled receptor-like"/>
    <property type="match status" value="1"/>
</dbReference>
<dbReference type="PROSITE" id="PS00237">
    <property type="entry name" value="G_PROTEIN_RECEP_F1_1"/>
    <property type="match status" value="1"/>
</dbReference>
<dbReference type="PROSITE" id="PS50262">
    <property type="entry name" value="G_PROTEIN_RECEP_F1_2"/>
    <property type="match status" value="1"/>
</dbReference>
<accession>P0C623</accession>
<accession>A0A087X1L2</accession>
<name>OR4Q2_HUMAN</name>